<evidence type="ECO:0000269" key="1">
    <source>
    </source>
</evidence>
<evidence type="ECO:0000269" key="2">
    <source>
    </source>
</evidence>
<evidence type="ECO:0000303" key="3">
    <source>
    </source>
</evidence>
<evidence type="ECO:0000303" key="4">
    <source>
    </source>
</evidence>
<evidence type="ECO:0000303" key="5">
    <source>
    </source>
</evidence>
<evidence type="ECO:0000303" key="6">
    <source>
    </source>
</evidence>
<evidence type="ECO:0000305" key="7"/>
<evidence type="ECO:0000312" key="8">
    <source>
        <dbReference type="HGNC" id="HGNC:25565"/>
    </source>
</evidence>
<evidence type="ECO:0007744" key="9">
    <source>
    </source>
</evidence>
<evidence type="ECO:0007744" key="10">
    <source>
    </source>
</evidence>
<dbReference type="EMBL" id="AL354614">
    <property type="protein sequence ID" value="CAB89727.1"/>
    <property type="molecule type" value="mRNA"/>
</dbReference>
<dbReference type="EMBL" id="AK001568">
    <property type="protein sequence ID" value="BAA91761.1"/>
    <property type="molecule type" value="mRNA"/>
</dbReference>
<dbReference type="EMBL" id="AK023532">
    <property type="protein sequence ID" value="BAB14600.1"/>
    <property type="molecule type" value="mRNA"/>
</dbReference>
<dbReference type="EMBL" id="AK096493">
    <property type="protein sequence ID" value="BAG53304.1"/>
    <property type="molecule type" value="mRNA"/>
</dbReference>
<dbReference type="EMBL" id="AL021940">
    <property type="status" value="NOT_ANNOTATED_CDS"/>
    <property type="molecule type" value="Genomic_DNA"/>
</dbReference>
<dbReference type="EMBL" id="AL031297">
    <property type="status" value="NOT_ANNOTATED_CDS"/>
    <property type="molecule type" value="Genomic_DNA"/>
</dbReference>
<dbReference type="EMBL" id="CH471067">
    <property type="protein sequence ID" value="EAW90863.1"/>
    <property type="molecule type" value="Genomic_DNA"/>
</dbReference>
<dbReference type="EMBL" id="BC091516">
    <property type="protein sequence ID" value="AAH91516.1"/>
    <property type="molecule type" value="mRNA"/>
</dbReference>
<dbReference type="EMBL" id="BC107168">
    <property type="protein sequence ID" value="AAI07169.1"/>
    <property type="molecule type" value="mRNA"/>
</dbReference>
<dbReference type="EMBL" id="BC107169">
    <property type="protein sequence ID" value="AAI07170.1"/>
    <property type="molecule type" value="mRNA"/>
</dbReference>
<dbReference type="CCDS" id="CCDS1285.1">
    <molecule id="Q9NSG2-1"/>
</dbReference>
<dbReference type="CCDS" id="CCDS86030.1">
    <molecule id="Q9NSG2-3"/>
</dbReference>
<dbReference type="RefSeq" id="NP_001306976.1">
    <molecule id="Q9NSG2-1"/>
    <property type="nucleotide sequence ID" value="NM_001320047.2"/>
</dbReference>
<dbReference type="RefSeq" id="NP_001306977.1">
    <molecule id="Q9NSG2-2"/>
    <property type="nucleotide sequence ID" value="NM_001320048.2"/>
</dbReference>
<dbReference type="RefSeq" id="NP_001306979.1">
    <property type="nucleotide sequence ID" value="NM_001320050.1"/>
</dbReference>
<dbReference type="RefSeq" id="NP_001306980.1">
    <property type="nucleotide sequence ID" value="NM_001320051.1"/>
</dbReference>
<dbReference type="RefSeq" id="NP_001350668.1">
    <molecule id="Q9NSG2-3"/>
    <property type="nucleotide sequence ID" value="NM_001363739.2"/>
</dbReference>
<dbReference type="RefSeq" id="NP_001353700.1">
    <molecule id="Q9NSG2-3"/>
    <property type="nucleotide sequence ID" value="NM_001366771.1"/>
</dbReference>
<dbReference type="RefSeq" id="NP_001353701.1">
    <molecule id="Q9NSG2-3"/>
    <property type="nucleotide sequence ID" value="NM_001366772.1"/>
</dbReference>
<dbReference type="RefSeq" id="NP_001353702.1">
    <molecule id="Q9NSG2-3"/>
    <property type="nucleotide sequence ID" value="NM_001366773.1"/>
</dbReference>
<dbReference type="RefSeq" id="NP_060656.2">
    <property type="nucleotide sequence ID" value="NM_018186.3"/>
</dbReference>
<dbReference type="RefSeq" id="XP_011508037.1">
    <property type="nucleotide sequence ID" value="XM_011509735.2"/>
</dbReference>
<dbReference type="RefSeq" id="XP_016857213.1">
    <property type="nucleotide sequence ID" value="XM_017001724.1"/>
</dbReference>
<dbReference type="RefSeq" id="XP_016857214.1">
    <property type="nucleotide sequence ID" value="XM_017001725.1"/>
</dbReference>
<dbReference type="RefSeq" id="XP_047280699.1">
    <molecule id="Q9NSG2-1"/>
    <property type="nucleotide sequence ID" value="XM_047424743.1"/>
</dbReference>
<dbReference type="RefSeq" id="XP_047280707.1">
    <molecule id="Q9NSG2-1"/>
    <property type="nucleotide sequence ID" value="XM_047424751.1"/>
</dbReference>
<dbReference type="RefSeq" id="XP_047280708.1">
    <molecule id="Q9NSG2-1"/>
    <property type="nucleotide sequence ID" value="XM_047424752.1"/>
</dbReference>
<dbReference type="RefSeq" id="XP_047280715.1">
    <molecule id="Q9NSG2-1"/>
    <property type="nucleotide sequence ID" value="XM_047424759.1"/>
</dbReference>
<dbReference type="RefSeq" id="XP_047280716.1">
    <molecule id="Q9NSG2-1"/>
    <property type="nucleotide sequence ID" value="XM_047424760.1"/>
</dbReference>
<dbReference type="RefSeq" id="XP_047280718.1">
    <molecule id="Q9NSG2-1"/>
    <property type="nucleotide sequence ID" value="XM_047424762.1"/>
</dbReference>
<dbReference type="RefSeq" id="XP_047280727.1">
    <molecule id="Q9NSG2-3"/>
    <property type="nucleotide sequence ID" value="XM_047424771.1"/>
</dbReference>
<dbReference type="RefSeq" id="XP_054193542.1">
    <molecule id="Q9NSG2-1"/>
    <property type="nucleotide sequence ID" value="XM_054337567.1"/>
</dbReference>
<dbReference type="RefSeq" id="XP_054193543.1">
    <molecule id="Q9NSG2-1"/>
    <property type="nucleotide sequence ID" value="XM_054337568.1"/>
</dbReference>
<dbReference type="RefSeq" id="XP_054193544.1">
    <molecule id="Q9NSG2-1"/>
    <property type="nucleotide sequence ID" value="XM_054337569.1"/>
</dbReference>
<dbReference type="RefSeq" id="XP_054193545.1">
    <molecule id="Q9NSG2-1"/>
    <property type="nucleotide sequence ID" value="XM_054337570.1"/>
</dbReference>
<dbReference type="RefSeq" id="XP_054193546.1">
    <molecule id="Q9NSG2-1"/>
    <property type="nucleotide sequence ID" value="XM_054337571.1"/>
</dbReference>
<dbReference type="RefSeq" id="XP_054193549.1">
    <molecule id="Q9NSG2-3"/>
    <property type="nucleotide sequence ID" value="XM_054337574.1"/>
</dbReference>
<dbReference type="SMR" id="Q9NSG2"/>
<dbReference type="BioGRID" id="120851">
    <property type="interactions" value="61"/>
</dbReference>
<dbReference type="ComplexPortal" id="CPX-9561">
    <property type="entry name" value="FLIP-FIGNL1 DNA interstrand crosslink repair complex"/>
</dbReference>
<dbReference type="FunCoup" id="Q9NSG2">
    <property type="interactions" value="1958"/>
</dbReference>
<dbReference type="IntAct" id="Q9NSG2">
    <property type="interactions" value="56"/>
</dbReference>
<dbReference type="STRING" id="9606.ENSP00000286031"/>
<dbReference type="iPTMnet" id="Q9NSG2"/>
<dbReference type="PhosphoSitePlus" id="Q9NSG2"/>
<dbReference type="BioMuta" id="C1orf112"/>
<dbReference type="DMDM" id="74761679"/>
<dbReference type="jPOST" id="Q9NSG2"/>
<dbReference type="MassIVE" id="Q9NSG2"/>
<dbReference type="PaxDb" id="9606-ENSP00000286031"/>
<dbReference type="PeptideAtlas" id="Q9NSG2"/>
<dbReference type="ProteomicsDB" id="82548">
    <molecule id="Q9NSG2-1"/>
</dbReference>
<dbReference type="ProteomicsDB" id="82549">
    <molecule id="Q9NSG2-2"/>
</dbReference>
<dbReference type="ProteomicsDB" id="82550">
    <molecule id="Q9NSG2-3"/>
</dbReference>
<dbReference type="Pumba" id="Q9NSG2"/>
<dbReference type="Antibodypedia" id="20545">
    <property type="antibodies" value="83 antibodies from 13 providers"/>
</dbReference>
<dbReference type="DNASU" id="55732"/>
<dbReference type="Ensembl" id="ENST00000286031.10">
    <molecule id="Q9NSG2-1"/>
    <property type="protein sequence ID" value="ENSP00000286031.6"/>
    <property type="gene ID" value="ENSG00000000460.17"/>
</dbReference>
<dbReference type="Ensembl" id="ENST00000359326.9">
    <molecule id="Q9NSG2-1"/>
    <property type="protein sequence ID" value="ENSP00000352276.4"/>
    <property type="gene ID" value="ENSG00000000460.17"/>
</dbReference>
<dbReference type="Ensembl" id="ENST00000413811.3">
    <molecule id="Q9NSG2-3"/>
    <property type="protein sequence ID" value="ENSP00000389257.3"/>
    <property type="gene ID" value="ENSG00000000460.17"/>
</dbReference>
<dbReference type="GeneID" id="55732"/>
<dbReference type="KEGG" id="hsa:55732"/>
<dbReference type="MANE-Select" id="ENST00000359326.9">
    <property type="protein sequence ID" value="ENSP00000352276.4"/>
    <property type="RefSeq nucleotide sequence ID" value="NM_001320047.2"/>
    <property type="RefSeq protein sequence ID" value="NP_001306976.1"/>
</dbReference>
<dbReference type="UCSC" id="uc001ggp.4">
    <molecule id="Q9NSG2-1"/>
    <property type="organism name" value="human"/>
</dbReference>
<dbReference type="AGR" id="HGNC:25565"/>
<dbReference type="CTD" id="55732"/>
<dbReference type="DisGeNET" id="55732"/>
<dbReference type="GeneCards" id="FIRRM"/>
<dbReference type="HGNC" id="HGNC:25565">
    <property type="gene designation" value="FIRRM"/>
</dbReference>
<dbReference type="HPA" id="ENSG00000000460">
    <property type="expression patterns" value="Tissue enhanced (parathyroid)"/>
</dbReference>
<dbReference type="neXtProt" id="NX_Q9NSG2"/>
<dbReference type="OpenTargets" id="ENSG00000000460"/>
<dbReference type="PharmGKB" id="PA142672496"/>
<dbReference type="VEuPathDB" id="HostDB:ENSG00000000460"/>
<dbReference type="eggNOG" id="ENOG502QQPV">
    <property type="taxonomic scope" value="Eukaryota"/>
</dbReference>
<dbReference type="GeneTree" id="ENSGT00390000004791"/>
<dbReference type="HOGENOM" id="CLU_335441_0_0_1"/>
<dbReference type="InParanoid" id="Q9NSG2"/>
<dbReference type="OMA" id="PCVQQTF"/>
<dbReference type="PAN-GO" id="Q9NSG2">
    <property type="GO annotations" value="0 GO annotations based on evolutionary models"/>
</dbReference>
<dbReference type="PhylomeDB" id="Q9NSG2"/>
<dbReference type="TreeFam" id="TF328571"/>
<dbReference type="PathwayCommons" id="Q9NSG2"/>
<dbReference type="Reactome" id="R-HSA-2500257">
    <property type="pathway name" value="Resolution of Sister Chromatid Cohesion"/>
</dbReference>
<dbReference type="Reactome" id="R-HSA-5693568">
    <property type="pathway name" value="Resolution of D-loop Structures through Holliday Junction Intermediates"/>
</dbReference>
<dbReference type="Reactome" id="R-HSA-912446">
    <property type="pathway name" value="Meiotic recombination"/>
</dbReference>
<dbReference type="SignaLink" id="Q9NSG2"/>
<dbReference type="BioGRID-ORCS" id="55732">
    <property type="hits" value="26 hits in 1130 CRISPR screens"/>
</dbReference>
<dbReference type="ChiTaRS" id="C1orf112">
    <property type="organism name" value="human"/>
</dbReference>
<dbReference type="GenomeRNAi" id="55732"/>
<dbReference type="Pharos" id="Q9NSG2">
    <property type="development level" value="Tdark"/>
</dbReference>
<dbReference type="PRO" id="PR:Q9NSG2"/>
<dbReference type="Proteomes" id="UP000005640">
    <property type="component" value="Chromosome 1"/>
</dbReference>
<dbReference type="RNAct" id="Q9NSG2">
    <property type="molecule type" value="protein"/>
</dbReference>
<dbReference type="Bgee" id="ENSG00000000460">
    <property type="expression patterns" value="Expressed in primordial germ cell in gonad and 105 other cell types or tissues"/>
</dbReference>
<dbReference type="ExpressionAtlas" id="Q9NSG2">
    <property type="expression patterns" value="baseline and differential"/>
</dbReference>
<dbReference type="GO" id="GO:0000775">
    <property type="term" value="C:chromosome, centromeric region"/>
    <property type="evidence" value="ECO:0000314"/>
    <property type="project" value="UniProtKB"/>
</dbReference>
<dbReference type="GO" id="GO:0005829">
    <property type="term" value="C:cytosol"/>
    <property type="evidence" value="ECO:0000304"/>
    <property type="project" value="Reactome"/>
</dbReference>
<dbReference type="GO" id="GO:0000776">
    <property type="term" value="C:kinetochore"/>
    <property type="evidence" value="ECO:0000314"/>
    <property type="project" value="UniProtKB"/>
</dbReference>
<dbReference type="GO" id="GO:0030496">
    <property type="term" value="C:midbody"/>
    <property type="evidence" value="ECO:0000314"/>
    <property type="project" value="UniProtKB"/>
</dbReference>
<dbReference type="GO" id="GO:0005730">
    <property type="term" value="C:nucleolus"/>
    <property type="evidence" value="ECO:0000314"/>
    <property type="project" value="HPA"/>
</dbReference>
<dbReference type="GO" id="GO:0005654">
    <property type="term" value="C:nucleoplasm"/>
    <property type="evidence" value="ECO:0000314"/>
    <property type="project" value="HPA"/>
</dbReference>
<dbReference type="GO" id="GO:0005634">
    <property type="term" value="C:nucleus"/>
    <property type="evidence" value="ECO:0000314"/>
    <property type="project" value="UniProtKB"/>
</dbReference>
<dbReference type="GO" id="GO:0051233">
    <property type="term" value="C:spindle midzone"/>
    <property type="evidence" value="ECO:0000314"/>
    <property type="project" value="UniProtKB"/>
</dbReference>
<dbReference type="GO" id="GO:0019901">
    <property type="term" value="F:protein kinase binding"/>
    <property type="evidence" value="ECO:0000314"/>
    <property type="project" value="UniProtKB"/>
</dbReference>
<dbReference type="GO" id="GO:0007059">
    <property type="term" value="P:chromosome segregation"/>
    <property type="evidence" value="ECO:0000315"/>
    <property type="project" value="UniProtKB"/>
</dbReference>
<dbReference type="GO" id="GO:0036297">
    <property type="term" value="P:interstrand cross-link repair"/>
    <property type="evidence" value="ECO:0000315"/>
    <property type="project" value="UniProtKB"/>
</dbReference>
<dbReference type="GO" id="GO:0000278">
    <property type="term" value="P:mitotic cell cycle"/>
    <property type="evidence" value="ECO:0000315"/>
    <property type="project" value="UniProtKB"/>
</dbReference>
<dbReference type="GO" id="GO:0045859">
    <property type="term" value="P:regulation of protein kinase activity"/>
    <property type="evidence" value="ECO:0000315"/>
    <property type="project" value="UniProtKB"/>
</dbReference>
<dbReference type="InterPro" id="IPR027902">
    <property type="entry name" value="DUF4487"/>
</dbReference>
<dbReference type="PANTHER" id="PTHR16071">
    <property type="entry name" value="CHROMOSOME 1 OPEN READING FRAME 112"/>
    <property type="match status" value="1"/>
</dbReference>
<dbReference type="PANTHER" id="PTHR16071:SF2">
    <property type="entry name" value="FIGNL1-INTERACTING REGULATOR OF RECOMBINATION AND MITOSIS"/>
    <property type="match status" value="1"/>
</dbReference>
<dbReference type="Pfam" id="PF14868">
    <property type="entry name" value="DUF4487"/>
    <property type="match status" value="1"/>
</dbReference>
<gene>
    <name evidence="8" type="primary">FIRRM</name>
    <name evidence="6" type="synonym">APOLO1</name>
    <name type="synonym">C1orf112</name>
</gene>
<sequence length="853" mass="96554">MFLPHMNHLTLEQTFFSQVLPKTVKLFDDMMYELTSQARGLSSQNLEIQTTLRNILQTMVQLLGALTGCVQHICATQESIILENIQSLPSSVLHIIKSTFVHCKNSESVYSGCLHLVSDLLQALFKEAYSLQKQLMELLDMVCMDPLVDDNDDILNMVIVIHSLLDICSVISSMDHAFHANTWKFIIKQSLKHQSIIKSQLKHKDIITSLCEDILFSFHSCLQLAEQMTQSDAQDNADYRLFQKTLKLCRFFANSLLHYAKEFLPFLSDSCCTLHQLYLQIHSKFPPSLYATRISKAHQEEIAGAFLVTLDPLISQLLTFQPFMQVVLDSKLDLPCELQFPQCLLLVVVMDKLPSQPKEVQTLWCTDSQVSETTTRISLLKAVFYSFEQCSGELSLPVHLQGLKSKGKAEVAVTLYQHVCVHLCTFITSFHPSLFAELDAALLNAVLSANMITSLLAMDAWCFLARYGTAELCAHHVTIVAHLIKSCPGECYQLINLSILLKRLFFFMAPPHQLEFIQKFSPKEAENLPLWQHISFQALPPELREQTVHEVTTVGTAECRKWLSRSRTLGELESLNTVLSALLAVCNSAGEALDTGKQTAIIEVVSQLWAFLNIKQVADQPYVQQTFSLLLPLLGFFIQTLDPKLILQAVTLQTSLLKLELPDYVRLAMLDFVSSLGKLFIPEAIQDRILPNLSCMFALLLADRSWLLEQHTLEAFTQFAEGTNHEEIVPQCLSSEETKNKVVSFLEKTGFVDETEAAKVERVKQEKGIFWEPFANVTVEEAKRSSLQPYAKRARQEFPWEEEYRSALHTIAGALEATESLLQKGPAPAWLSMEMEALQERMDKLKRYIHTLG</sequence>
<protein>
    <recommendedName>
        <fullName evidence="8">FIGNL1-interacting regulator of recombination and mitosis</fullName>
    </recommendedName>
    <alternativeName>
        <fullName evidence="5">FIDGETIN-like-1 interacting protein</fullName>
        <shortName evidence="5">FLIP</shortName>
    </alternativeName>
    <alternativeName>
        <fullName evidence="6">POLO1-associating protein</fullName>
    </alternativeName>
</protein>
<reference key="1">
    <citation type="submission" date="2000-04" db="EMBL/GenBank/DDBJ databases">
        <authorList>
            <person name="Rhodes S."/>
            <person name="Huckle E."/>
        </authorList>
    </citation>
    <scope>NUCLEOTIDE SEQUENCE [LARGE SCALE MRNA] (ISOFORM 1)</scope>
</reference>
<reference key="2">
    <citation type="journal article" date="2004" name="Nat. Genet.">
        <title>Complete sequencing and characterization of 21,243 full-length human cDNAs.</title>
        <authorList>
            <person name="Ota T."/>
            <person name="Suzuki Y."/>
            <person name="Nishikawa T."/>
            <person name="Otsuki T."/>
            <person name="Sugiyama T."/>
            <person name="Irie R."/>
            <person name="Wakamatsu A."/>
            <person name="Hayashi K."/>
            <person name="Sato H."/>
            <person name="Nagai K."/>
            <person name="Kimura K."/>
            <person name="Makita H."/>
            <person name="Sekine M."/>
            <person name="Obayashi M."/>
            <person name="Nishi T."/>
            <person name="Shibahara T."/>
            <person name="Tanaka T."/>
            <person name="Ishii S."/>
            <person name="Yamamoto J."/>
            <person name="Saito K."/>
            <person name="Kawai Y."/>
            <person name="Isono Y."/>
            <person name="Nakamura Y."/>
            <person name="Nagahari K."/>
            <person name="Murakami K."/>
            <person name="Yasuda T."/>
            <person name="Iwayanagi T."/>
            <person name="Wagatsuma M."/>
            <person name="Shiratori A."/>
            <person name="Sudo H."/>
            <person name="Hosoiri T."/>
            <person name="Kaku Y."/>
            <person name="Kodaira H."/>
            <person name="Kondo H."/>
            <person name="Sugawara M."/>
            <person name="Takahashi M."/>
            <person name="Kanda K."/>
            <person name="Yokoi T."/>
            <person name="Furuya T."/>
            <person name="Kikkawa E."/>
            <person name="Omura Y."/>
            <person name="Abe K."/>
            <person name="Kamihara K."/>
            <person name="Katsuta N."/>
            <person name="Sato K."/>
            <person name="Tanikawa M."/>
            <person name="Yamazaki M."/>
            <person name="Ninomiya K."/>
            <person name="Ishibashi T."/>
            <person name="Yamashita H."/>
            <person name="Murakawa K."/>
            <person name="Fujimori K."/>
            <person name="Tanai H."/>
            <person name="Kimata M."/>
            <person name="Watanabe M."/>
            <person name="Hiraoka S."/>
            <person name="Chiba Y."/>
            <person name="Ishida S."/>
            <person name="Ono Y."/>
            <person name="Takiguchi S."/>
            <person name="Watanabe S."/>
            <person name="Yosida M."/>
            <person name="Hotuta T."/>
            <person name="Kusano J."/>
            <person name="Kanehori K."/>
            <person name="Takahashi-Fujii A."/>
            <person name="Hara H."/>
            <person name="Tanase T.-O."/>
            <person name="Nomura Y."/>
            <person name="Togiya S."/>
            <person name="Komai F."/>
            <person name="Hara R."/>
            <person name="Takeuchi K."/>
            <person name="Arita M."/>
            <person name="Imose N."/>
            <person name="Musashino K."/>
            <person name="Yuuki H."/>
            <person name="Oshima A."/>
            <person name="Sasaki N."/>
            <person name="Aotsuka S."/>
            <person name="Yoshikawa Y."/>
            <person name="Matsunawa H."/>
            <person name="Ichihara T."/>
            <person name="Shiohata N."/>
            <person name="Sano S."/>
            <person name="Moriya S."/>
            <person name="Momiyama H."/>
            <person name="Satoh N."/>
            <person name="Takami S."/>
            <person name="Terashima Y."/>
            <person name="Suzuki O."/>
            <person name="Nakagawa S."/>
            <person name="Senoh A."/>
            <person name="Mizoguchi H."/>
            <person name="Goto Y."/>
            <person name="Shimizu F."/>
            <person name="Wakebe H."/>
            <person name="Hishigaki H."/>
            <person name="Watanabe T."/>
            <person name="Sugiyama A."/>
            <person name="Takemoto M."/>
            <person name="Kawakami B."/>
            <person name="Yamazaki M."/>
            <person name="Watanabe K."/>
            <person name="Kumagai A."/>
            <person name="Itakura S."/>
            <person name="Fukuzumi Y."/>
            <person name="Fujimori Y."/>
            <person name="Komiyama M."/>
            <person name="Tashiro H."/>
            <person name="Tanigami A."/>
            <person name="Fujiwara T."/>
            <person name="Ono T."/>
            <person name="Yamada K."/>
            <person name="Fujii Y."/>
            <person name="Ozaki K."/>
            <person name="Hirao M."/>
            <person name="Ohmori Y."/>
            <person name="Kawabata A."/>
            <person name="Hikiji T."/>
            <person name="Kobatake N."/>
            <person name="Inagaki H."/>
            <person name="Ikema Y."/>
            <person name="Okamoto S."/>
            <person name="Okitani R."/>
            <person name="Kawakami T."/>
            <person name="Noguchi S."/>
            <person name="Itoh T."/>
            <person name="Shigeta K."/>
            <person name="Senba T."/>
            <person name="Matsumura K."/>
            <person name="Nakajima Y."/>
            <person name="Mizuno T."/>
            <person name="Morinaga M."/>
            <person name="Sasaki M."/>
            <person name="Togashi T."/>
            <person name="Oyama M."/>
            <person name="Hata H."/>
            <person name="Watanabe M."/>
            <person name="Komatsu T."/>
            <person name="Mizushima-Sugano J."/>
            <person name="Satoh T."/>
            <person name="Shirai Y."/>
            <person name="Takahashi Y."/>
            <person name="Nakagawa K."/>
            <person name="Okumura K."/>
            <person name="Nagase T."/>
            <person name="Nomura N."/>
            <person name="Kikuchi H."/>
            <person name="Masuho Y."/>
            <person name="Yamashita R."/>
            <person name="Nakai K."/>
            <person name="Yada T."/>
            <person name="Nakamura Y."/>
            <person name="Ohara O."/>
            <person name="Isogai T."/>
            <person name="Sugano S."/>
        </authorList>
    </citation>
    <scope>NUCLEOTIDE SEQUENCE [LARGE SCALE MRNA] (ISOFORMS 1; 2 AND 3)</scope>
    <source>
        <tissue>Brain</tissue>
        <tissue>Placenta</tissue>
        <tissue>Teratocarcinoma</tissue>
    </source>
</reference>
<reference key="3">
    <citation type="journal article" date="2006" name="Nature">
        <title>The DNA sequence and biological annotation of human chromosome 1.</title>
        <authorList>
            <person name="Gregory S.G."/>
            <person name="Barlow K.F."/>
            <person name="McLay K.E."/>
            <person name="Kaul R."/>
            <person name="Swarbreck D."/>
            <person name="Dunham A."/>
            <person name="Scott C.E."/>
            <person name="Howe K.L."/>
            <person name="Woodfine K."/>
            <person name="Spencer C.C.A."/>
            <person name="Jones M.C."/>
            <person name="Gillson C."/>
            <person name="Searle S."/>
            <person name="Zhou Y."/>
            <person name="Kokocinski F."/>
            <person name="McDonald L."/>
            <person name="Evans R."/>
            <person name="Phillips K."/>
            <person name="Atkinson A."/>
            <person name="Cooper R."/>
            <person name="Jones C."/>
            <person name="Hall R.E."/>
            <person name="Andrews T.D."/>
            <person name="Lloyd C."/>
            <person name="Ainscough R."/>
            <person name="Almeida J.P."/>
            <person name="Ambrose K.D."/>
            <person name="Anderson F."/>
            <person name="Andrew R.W."/>
            <person name="Ashwell R.I.S."/>
            <person name="Aubin K."/>
            <person name="Babbage A.K."/>
            <person name="Bagguley C.L."/>
            <person name="Bailey J."/>
            <person name="Beasley H."/>
            <person name="Bethel G."/>
            <person name="Bird C.P."/>
            <person name="Bray-Allen S."/>
            <person name="Brown J.Y."/>
            <person name="Brown A.J."/>
            <person name="Buckley D."/>
            <person name="Burton J."/>
            <person name="Bye J."/>
            <person name="Carder C."/>
            <person name="Chapman J.C."/>
            <person name="Clark S.Y."/>
            <person name="Clarke G."/>
            <person name="Clee C."/>
            <person name="Cobley V."/>
            <person name="Collier R.E."/>
            <person name="Corby N."/>
            <person name="Coville G.J."/>
            <person name="Davies J."/>
            <person name="Deadman R."/>
            <person name="Dunn M."/>
            <person name="Earthrowl M."/>
            <person name="Ellington A.G."/>
            <person name="Errington H."/>
            <person name="Frankish A."/>
            <person name="Frankland J."/>
            <person name="French L."/>
            <person name="Garner P."/>
            <person name="Garnett J."/>
            <person name="Gay L."/>
            <person name="Ghori M.R.J."/>
            <person name="Gibson R."/>
            <person name="Gilby L.M."/>
            <person name="Gillett W."/>
            <person name="Glithero R.J."/>
            <person name="Grafham D.V."/>
            <person name="Griffiths C."/>
            <person name="Griffiths-Jones S."/>
            <person name="Grocock R."/>
            <person name="Hammond S."/>
            <person name="Harrison E.S.I."/>
            <person name="Hart E."/>
            <person name="Haugen E."/>
            <person name="Heath P.D."/>
            <person name="Holmes S."/>
            <person name="Holt K."/>
            <person name="Howden P.J."/>
            <person name="Hunt A.R."/>
            <person name="Hunt S.E."/>
            <person name="Hunter G."/>
            <person name="Isherwood J."/>
            <person name="James R."/>
            <person name="Johnson C."/>
            <person name="Johnson D."/>
            <person name="Joy A."/>
            <person name="Kay M."/>
            <person name="Kershaw J.K."/>
            <person name="Kibukawa M."/>
            <person name="Kimberley A.M."/>
            <person name="King A."/>
            <person name="Knights A.J."/>
            <person name="Lad H."/>
            <person name="Laird G."/>
            <person name="Lawlor S."/>
            <person name="Leongamornlert D.A."/>
            <person name="Lloyd D.M."/>
            <person name="Loveland J."/>
            <person name="Lovell J."/>
            <person name="Lush M.J."/>
            <person name="Lyne R."/>
            <person name="Martin S."/>
            <person name="Mashreghi-Mohammadi M."/>
            <person name="Matthews L."/>
            <person name="Matthews N.S.W."/>
            <person name="McLaren S."/>
            <person name="Milne S."/>
            <person name="Mistry S."/>
            <person name="Moore M.J.F."/>
            <person name="Nickerson T."/>
            <person name="O'Dell C.N."/>
            <person name="Oliver K."/>
            <person name="Palmeiri A."/>
            <person name="Palmer S.A."/>
            <person name="Parker A."/>
            <person name="Patel D."/>
            <person name="Pearce A.V."/>
            <person name="Peck A.I."/>
            <person name="Pelan S."/>
            <person name="Phelps K."/>
            <person name="Phillimore B.J."/>
            <person name="Plumb R."/>
            <person name="Rajan J."/>
            <person name="Raymond C."/>
            <person name="Rouse G."/>
            <person name="Saenphimmachak C."/>
            <person name="Sehra H.K."/>
            <person name="Sheridan E."/>
            <person name="Shownkeen R."/>
            <person name="Sims S."/>
            <person name="Skuce C.D."/>
            <person name="Smith M."/>
            <person name="Steward C."/>
            <person name="Subramanian S."/>
            <person name="Sycamore N."/>
            <person name="Tracey A."/>
            <person name="Tromans A."/>
            <person name="Van Helmond Z."/>
            <person name="Wall M."/>
            <person name="Wallis J.M."/>
            <person name="White S."/>
            <person name="Whitehead S.L."/>
            <person name="Wilkinson J.E."/>
            <person name="Willey D.L."/>
            <person name="Williams H."/>
            <person name="Wilming L."/>
            <person name="Wray P.W."/>
            <person name="Wu Z."/>
            <person name="Coulson A."/>
            <person name="Vaudin M."/>
            <person name="Sulston J.E."/>
            <person name="Durbin R.M."/>
            <person name="Hubbard T."/>
            <person name="Wooster R."/>
            <person name="Dunham I."/>
            <person name="Carter N.P."/>
            <person name="McVean G."/>
            <person name="Ross M.T."/>
            <person name="Harrow J."/>
            <person name="Olson M.V."/>
            <person name="Beck S."/>
            <person name="Rogers J."/>
            <person name="Bentley D.R."/>
        </authorList>
    </citation>
    <scope>NUCLEOTIDE SEQUENCE [LARGE SCALE GENOMIC DNA]</scope>
</reference>
<reference key="4">
    <citation type="submission" date="2005-07" db="EMBL/GenBank/DDBJ databases">
        <authorList>
            <person name="Mural R.J."/>
            <person name="Istrail S."/>
            <person name="Sutton G.G."/>
            <person name="Florea L."/>
            <person name="Halpern A.L."/>
            <person name="Mobarry C.M."/>
            <person name="Lippert R."/>
            <person name="Walenz B."/>
            <person name="Shatkay H."/>
            <person name="Dew I."/>
            <person name="Miller J.R."/>
            <person name="Flanigan M.J."/>
            <person name="Edwards N.J."/>
            <person name="Bolanos R."/>
            <person name="Fasulo D."/>
            <person name="Halldorsson B.V."/>
            <person name="Hannenhalli S."/>
            <person name="Turner R."/>
            <person name="Yooseph S."/>
            <person name="Lu F."/>
            <person name="Nusskern D.R."/>
            <person name="Shue B.C."/>
            <person name="Zheng X.H."/>
            <person name="Zhong F."/>
            <person name="Delcher A.L."/>
            <person name="Huson D.H."/>
            <person name="Kravitz S.A."/>
            <person name="Mouchard L."/>
            <person name="Reinert K."/>
            <person name="Remington K.A."/>
            <person name="Clark A.G."/>
            <person name="Waterman M.S."/>
            <person name="Eichler E.E."/>
            <person name="Adams M.D."/>
            <person name="Hunkapiller M.W."/>
            <person name="Myers E.W."/>
            <person name="Venter J.C."/>
        </authorList>
    </citation>
    <scope>NUCLEOTIDE SEQUENCE [LARGE SCALE GENOMIC DNA]</scope>
</reference>
<reference key="5">
    <citation type="journal article" date="2004" name="Genome Res.">
        <title>The status, quality, and expansion of the NIH full-length cDNA project: the Mammalian Gene Collection (MGC).</title>
        <authorList>
            <consortium name="The MGC Project Team"/>
        </authorList>
    </citation>
    <scope>NUCLEOTIDE SEQUENCE [LARGE SCALE MRNA] (ISOFORMS 1 AND 3)</scope>
    <source>
        <tissue>Testis</tissue>
    </source>
</reference>
<reference key="6">
    <citation type="journal article" date="2009" name="Science">
        <title>Lysine acetylation targets protein complexes and co-regulates major cellular functions.</title>
        <authorList>
            <person name="Choudhary C."/>
            <person name="Kumar C."/>
            <person name="Gnad F."/>
            <person name="Nielsen M.L."/>
            <person name="Rehman M."/>
            <person name="Walther T.C."/>
            <person name="Olsen J.V."/>
            <person name="Mann M."/>
        </authorList>
    </citation>
    <scope>ACETYLATION [LARGE SCALE ANALYSIS] AT LYS-792</scope>
    <scope>IDENTIFICATION BY MASS SPECTROMETRY [LARGE SCALE ANALYSIS]</scope>
</reference>
<reference key="7">
    <citation type="journal article" date="2010" name="Sci. Signal.">
        <title>Quantitative phosphoproteomics reveals widespread full phosphorylation site occupancy during mitosis.</title>
        <authorList>
            <person name="Olsen J.V."/>
            <person name="Vermeulen M."/>
            <person name="Santamaria A."/>
            <person name="Kumar C."/>
            <person name="Miller M.L."/>
            <person name="Jensen L.J."/>
            <person name="Gnad F."/>
            <person name="Cox J."/>
            <person name="Jensen T.S."/>
            <person name="Nigg E.A."/>
            <person name="Brunak S."/>
            <person name="Mann M."/>
        </authorList>
    </citation>
    <scope>IDENTIFICATION BY MASS SPECTROMETRY [LARGE SCALE ANALYSIS]</scope>
    <source>
        <tissue>Cervix carcinoma</tissue>
    </source>
</reference>
<reference key="8">
    <citation type="journal article" date="2013" name="J. Proteome Res.">
        <title>Toward a comprehensive characterization of a human cancer cell phosphoproteome.</title>
        <authorList>
            <person name="Zhou H."/>
            <person name="Di Palma S."/>
            <person name="Preisinger C."/>
            <person name="Peng M."/>
            <person name="Polat A.N."/>
            <person name="Heck A.J."/>
            <person name="Mohammed S."/>
        </authorList>
    </citation>
    <scope>PHOSPHORYLATION [LARGE SCALE ANALYSIS] AT SER-43</scope>
    <scope>IDENTIFICATION BY MASS SPECTROMETRY [LARGE SCALE ANALYSIS]</scope>
    <source>
        <tissue>Cervix carcinoma</tissue>
        <tissue>Erythroleukemia</tissue>
    </source>
</reference>
<reference key="9">
    <citation type="journal article" date="2018" name="PLoS Genet.">
        <title>FIGL1 and its novel partner FLIP form a conserved complex that regulates homologous recombination.</title>
        <authorList>
            <person name="Fernandes J.B."/>
            <person name="Duhamel M."/>
            <person name="Seguela-Arnaud M."/>
            <person name="Froger N."/>
            <person name="Girard C."/>
            <person name="Choinard S."/>
            <person name="Solier V."/>
            <person name="De Winne N."/>
            <person name="De Jaeger G."/>
            <person name="Gevaert K."/>
            <person name="Andrey P."/>
            <person name="Grelon M."/>
            <person name="Guerois R."/>
            <person name="Kumar R."/>
            <person name="Mercier R."/>
        </authorList>
    </citation>
    <scope>SUBUNIT</scope>
    <scope>INTERACTION WITH FIGL1</scope>
</reference>
<reference key="10">
    <citation type="journal article" date="2021" name="Cell Rep.">
        <title>Feedback control of PLK1 by Apolo1 ensures accurate chromosome segregation.</title>
        <authorList>
            <person name="Xu L."/>
            <person name="Ali M."/>
            <person name="Duan W."/>
            <person name="Yuan X."/>
            <person name="Garba F."/>
            <person name="Mullen M."/>
            <person name="Sun B."/>
            <person name="Poser I."/>
            <person name="Duan H."/>
            <person name="Lu J."/>
            <person name="Tian R."/>
            <person name="Ge Y."/>
            <person name="Chu L."/>
            <person name="Pan W."/>
            <person name="Wang D."/>
            <person name="Hyman A."/>
            <person name="Green H."/>
            <person name="Li L."/>
            <person name="Dou Z."/>
            <person name="Liu D."/>
            <person name="Liu X."/>
            <person name="Yao X."/>
        </authorList>
    </citation>
    <scope>FUNCTION</scope>
    <scope>INTERACTION WITH PLK1 AND PPP1CC</scope>
    <scope>SUBCELLULAR LOCATION</scope>
    <scope>PHOSPHORYLATION AT SER-43 AND SER-744</scope>
    <scope>MUTAGENESIS OF SER-43 AND SER-744</scope>
</reference>
<keyword id="KW-0007">Acetylation</keyword>
<keyword id="KW-0025">Alternative splicing</keyword>
<keyword id="KW-0137">Centromere</keyword>
<keyword id="KW-0158">Chromosome</keyword>
<keyword id="KW-0963">Cytoplasm</keyword>
<keyword id="KW-0206">Cytoskeleton</keyword>
<keyword id="KW-0995">Kinetochore</keyword>
<keyword id="KW-0539">Nucleus</keyword>
<keyword id="KW-0597">Phosphoprotein</keyword>
<keyword id="KW-1267">Proteomics identification</keyword>
<keyword id="KW-1185">Reference proteome</keyword>
<accession>Q9NSG2</accession>
<accession>A6NFP1</accession>
<accession>B3KU42</accession>
<accession>Q3KNQ1</accession>
<accession>Q9H8L5</accession>
<accession>Q9NVJ0</accession>
<comment type="function">
    <text evidence="1 2">Regulates PLK1 kinase activity at kinetochores and promotes faithful chromosome segregation in prometaphase by bridging kinase and phosphatase activities (PubMed:34260926). Phosphorylation of FIRRM by PLK1 negatively regulates its interaction with the phosphatase, PPP1CC, thus creating a negative feedback loop for maintaining proper PLK1 kinase activity during mitosis (PubMed:34260926). In complex with FIGL1 may regulate homologous recombination (PubMed:29608566).</text>
</comment>
<comment type="subunit">
    <text evidence="1 2">Interacts (via its N-terminal region) with PLK1; controls PLK1 kinase activity (PubMed:34260926). Interacts (via the KVVXF motif) with PPP1CC; controls PLK1 kinase activity (PubMed:34260926). Interacts with FIGNL1; may regulate homologous recombination (PubMed:29608566).</text>
</comment>
<comment type="interaction">
    <interactant intactId="EBI-11128910">
        <id>Q9NSG2</id>
    </interactant>
    <interactant intactId="EBI-8468390">
        <id>Q6PIW4</id>
        <label>FIGNL1</label>
    </interactant>
    <organismsDiffer>false</organismsDiffer>
    <experiments>6</experiments>
</comment>
<comment type="interaction">
    <interactant intactId="EBI-11128910">
        <id>Q9NSG2</id>
    </interactant>
    <interactant intactId="EBI-10181968">
        <id>Q7Z4N8</id>
        <label>P4HA3</label>
    </interactant>
    <organismsDiffer>false</organismsDiffer>
    <experiments>3</experiments>
</comment>
<comment type="subcellular location">
    <subcellularLocation>
        <location evidence="2">Chromosome</location>
        <location evidence="2">Centromere</location>
        <location evidence="2">Kinetochore</location>
    </subcellularLocation>
    <subcellularLocation>
        <location evidence="2">Nucleus</location>
    </subcellularLocation>
    <subcellularLocation>
        <location evidence="2">Chromosome</location>
        <location evidence="2">Centromere</location>
    </subcellularLocation>
    <subcellularLocation>
        <location evidence="2">Midbody</location>
    </subcellularLocation>
    <subcellularLocation>
        <location evidence="2">Cytoplasm</location>
        <location evidence="2">Cytoskeleton</location>
        <location evidence="2">Spindle</location>
    </subcellularLocation>
    <text evidence="2">Exhibits cell-cycle-dependent distribution during mitosis. Detected in the nucleus in interphase. Colocalizes with PLK1 to the centromeres in a nearby prometaphase cells. Relocates to the central spindle in anaphase and to the midbody in telophase cells.</text>
</comment>
<comment type="alternative products">
    <event type="alternative splicing"/>
    <isoform>
        <id>Q9NSG2-1</id>
        <name>1</name>
        <sequence type="displayed"/>
    </isoform>
    <isoform>
        <id>Q9NSG2-2</id>
        <name>2</name>
        <sequence type="described" ref="VSP_023445"/>
    </isoform>
    <isoform>
        <id>Q9NSG2-3</id>
        <name>3</name>
        <sequence type="described" ref="VSP_023444"/>
    </isoform>
</comment>
<comment type="PTM">
    <text evidence="2">Phosphorylation at Ser-43 by PLK1 strengthens FIRRM-PLK1 interaction (PubMed:34260926). Phosphorylation at Ser-744 by PLK1 negatively regulates its interaction with PPP1CC (PubMed:34260926).</text>
</comment>
<proteinExistence type="evidence at protein level"/>
<feature type="chain" id="PRO_0000279461" description="FIGNL1-interacting regulator of recombination and mitosis">
    <location>
        <begin position="1"/>
        <end position="853"/>
    </location>
</feature>
<feature type="modified residue" description="Phosphoserine; by PLK1" evidence="2 10">
    <location>
        <position position="43"/>
    </location>
</feature>
<feature type="modified residue" description="Phosphoserine; by PLK1" evidence="2">
    <location>
        <position position="744"/>
    </location>
</feature>
<feature type="modified residue" description="N6-acetyllysine" evidence="9">
    <location>
        <position position="792"/>
    </location>
</feature>
<feature type="splice variant" id="VSP_023444" description="In isoform 3." evidence="3 4">
    <location>
        <begin position="1"/>
        <end position="323"/>
    </location>
</feature>
<feature type="splice variant" id="VSP_023445" description="In isoform 2." evidence="3">
    <location>
        <begin position="1"/>
        <end position="135"/>
    </location>
</feature>
<feature type="sequence variant" id="VAR_030906" description="In dbSNP:rs2272920.">
    <original>A</original>
    <variation>S</variation>
    <location>
        <position position="481"/>
    </location>
</feature>
<feature type="mutagenesis site" description="Decreased binding to PLK1." evidence="2">
    <original>S</original>
    <variation>A</variation>
    <location>
        <position position="43"/>
    </location>
</feature>
<feature type="mutagenesis site" description="Increased binding to PLK1." evidence="2">
    <original>S</original>
    <variation>D</variation>
    <location>
        <position position="43"/>
    </location>
</feature>
<feature type="mutagenesis site" description="Does not affect binding to PPP1CC. Rescues the mitotic defects seen in FIRRM-depleted cells." evidence="2">
    <original>S</original>
    <variation>A</variation>
    <location>
        <position position="744"/>
    </location>
</feature>
<feature type="mutagenesis site" description="Decreased binding to PPP1CC. Does not rescue the mitotic defects seen in FIRRM-depleted cells." evidence="2">
    <original>S</original>
    <variation>D</variation>
    <location>
        <position position="744"/>
    </location>
</feature>
<feature type="sequence conflict" description="In Ref. 2; BAB14600." evidence="7" ref="2">
    <original>D</original>
    <variation>G</variation>
    <location>
        <position position="594"/>
    </location>
</feature>
<feature type="sequence conflict" description="In Ref. 2; BAA91761." evidence="7" ref="2">
    <original>S</original>
    <variation>L</variation>
    <location>
        <position position="655"/>
    </location>
</feature>
<organism>
    <name type="scientific">Homo sapiens</name>
    <name type="common">Human</name>
    <dbReference type="NCBI Taxonomy" id="9606"/>
    <lineage>
        <taxon>Eukaryota</taxon>
        <taxon>Metazoa</taxon>
        <taxon>Chordata</taxon>
        <taxon>Craniata</taxon>
        <taxon>Vertebrata</taxon>
        <taxon>Euteleostomi</taxon>
        <taxon>Mammalia</taxon>
        <taxon>Eutheria</taxon>
        <taxon>Euarchontoglires</taxon>
        <taxon>Primates</taxon>
        <taxon>Haplorrhini</taxon>
        <taxon>Catarrhini</taxon>
        <taxon>Hominidae</taxon>
        <taxon>Homo</taxon>
    </lineage>
</organism>
<name>FIRRM_HUMAN</name>